<name>IAAC1_WHEAT</name>
<accession>P16850</accession>
<evidence type="ECO:0000269" key="1">
    <source ref="2"/>
</evidence>
<evidence type="ECO:0000305" key="2"/>
<proteinExistence type="evidence at protein level"/>
<protein>
    <recommendedName>
        <fullName>Alpha-amylase/trypsin inhibitor CM1</fullName>
    </recommendedName>
    <alternativeName>
        <fullName>Chloroform/methanol-soluble protein CM1</fullName>
    </alternativeName>
</protein>
<comment type="function">
    <text>Alpha-amylase/trypsin inhibitor. It could be involved in insect defense mechanisms.</text>
</comment>
<comment type="subunit">
    <text>Subunit of the tetrameric inhibitor.</text>
</comment>
<comment type="subcellular location">
    <subcellularLocation>
        <location>Secreted</location>
    </subcellularLocation>
</comment>
<comment type="tissue specificity">
    <text>Endosperm.</text>
</comment>
<comment type="miscellaneous">
    <text>CM proteins would be involved in the cooking quality of pasta.</text>
</comment>
<comment type="similarity">
    <text evidence="2">Belongs to the protease inhibitor I6 (cereal trypsin/alpha-amylase inhibitor) family.</text>
</comment>
<organism>
    <name type="scientific">Triticum aestivum</name>
    <name type="common">Wheat</name>
    <dbReference type="NCBI Taxonomy" id="4565"/>
    <lineage>
        <taxon>Eukaryota</taxon>
        <taxon>Viridiplantae</taxon>
        <taxon>Streptophyta</taxon>
        <taxon>Embryophyta</taxon>
        <taxon>Tracheophyta</taxon>
        <taxon>Spermatophyta</taxon>
        <taxon>Magnoliopsida</taxon>
        <taxon>Liliopsida</taxon>
        <taxon>Poales</taxon>
        <taxon>Poaceae</taxon>
        <taxon>BOP clade</taxon>
        <taxon>Pooideae</taxon>
        <taxon>Triticodae</taxon>
        <taxon>Triticeae</taxon>
        <taxon>Triticinae</taxon>
        <taxon>Triticum</taxon>
    </lineage>
</organism>
<reference key="1">
    <citation type="journal article" date="1990" name="Plant Mol. Biol.">
        <title>Cloning of cDNA and chromosomal location of genes encoding the three types of subunits of the wheat tetrameric inhibitor of insect alpha-amylase.</title>
        <authorList>
            <person name="Garcia-Maroto F."/>
            <person name="Marana C."/>
            <person name="Mena M."/>
            <person name="Garcia-Olmedo F."/>
            <person name="Carbonero P."/>
        </authorList>
    </citation>
    <scope>NUCLEOTIDE SEQUENCE [MRNA]</scope>
    <source>
        <strain>cv. Chinese Spring</strain>
        <tissue>Endosperm</tissue>
    </source>
</reference>
<reference key="2">
    <citation type="journal article" date="1986" name="Biochim. Biophys. Acta">
        <title>Evolutionary implications of sequential homologies among members of the trypsin / alpha-amylase inhibitor family (CM-proteins) in wheat and barley.</title>
        <authorList>
            <person name="Barber D."/>
            <person name="Sanchez-Monge R."/>
            <person name="Garcia-Olmedo F."/>
            <person name="Salcedo G."/>
            <person name="Mendez E."/>
        </authorList>
    </citation>
    <scope>PROTEIN SEQUENCE OF 26-53</scope>
    <source>
        <strain>cv. Candeal</strain>
    </source>
</reference>
<keyword id="KW-0022">Alpha-amylase inhibitor</keyword>
<keyword id="KW-0903">Direct protein sequencing</keyword>
<keyword id="KW-0646">Protease inhibitor</keyword>
<keyword id="KW-1185">Reference proteome</keyword>
<keyword id="KW-0964">Secreted</keyword>
<keyword id="KW-0722">Serine protease inhibitor</keyword>
<keyword id="KW-0732">Signal</keyword>
<sequence length="145" mass="15517">MASKSSISPLLLATVLVSVFAAATATGPYCYAGMGLPINPLEGCREYVAQQTCGISISGSAVSTEPGNTPRDRCCKELYDASQHCRCEAVRYFIGRRSDPNSSVLKDLPGCPREPQRDFAKVLVTSGHCNVMTVHNAPYCLGLDI</sequence>
<dbReference type="EMBL" id="X17575">
    <property type="protein sequence ID" value="CAA35598.1"/>
    <property type="molecule type" value="mRNA"/>
</dbReference>
<dbReference type="PIR" id="A25310">
    <property type="entry name" value="A25310"/>
</dbReference>
<dbReference type="PIR" id="S10027">
    <property type="entry name" value="S10027"/>
</dbReference>
<dbReference type="SMR" id="P16850"/>
<dbReference type="STRING" id="4565.P16850"/>
<dbReference type="Allergome" id="8188">
    <property type="allergen name" value="Tri a 29"/>
</dbReference>
<dbReference type="MEROPS" id="I06.004"/>
<dbReference type="Proteomes" id="UP000019116">
    <property type="component" value="Unplaced"/>
</dbReference>
<dbReference type="ExpressionAtlas" id="P16850">
    <property type="expression patterns" value="baseline and differential"/>
</dbReference>
<dbReference type="GO" id="GO:0005576">
    <property type="term" value="C:extracellular region"/>
    <property type="evidence" value="ECO:0007669"/>
    <property type="project" value="UniProtKB-SubCell"/>
</dbReference>
<dbReference type="GO" id="GO:0015066">
    <property type="term" value="F:alpha-amylase inhibitor activity"/>
    <property type="evidence" value="ECO:0007669"/>
    <property type="project" value="UniProtKB-KW"/>
</dbReference>
<dbReference type="GO" id="GO:0004867">
    <property type="term" value="F:serine-type endopeptidase inhibitor activity"/>
    <property type="evidence" value="ECO:0007669"/>
    <property type="project" value="UniProtKB-KW"/>
</dbReference>
<dbReference type="CDD" id="cd00261">
    <property type="entry name" value="AAI_SS"/>
    <property type="match status" value="1"/>
</dbReference>
<dbReference type="Gene3D" id="1.10.110.10">
    <property type="entry name" value="Plant lipid-transfer and hydrophobic proteins"/>
    <property type="match status" value="1"/>
</dbReference>
<dbReference type="InterPro" id="IPR006106">
    <property type="entry name" value="Allergen/soft/tryp_amyl_inhib"/>
</dbReference>
<dbReference type="InterPro" id="IPR006105">
    <property type="entry name" value="Allergen/tryp_amyl_inhib_CS"/>
</dbReference>
<dbReference type="InterPro" id="IPR036312">
    <property type="entry name" value="Bifun_inhib/LTP/seed_sf"/>
</dbReference>
<dbReference type="InterPro" id="IPR016140">
    <property type="entry name" value="Bifunc_inhib/LTP/seed_store"/>
</dbReference>
<dbReference type="PANTHER" id="PTHR34481:SF12">
    <property type="entry name" value="ALPHA-AMYLASE_TRYPSIN INHIBITOR CM2"/>
    <property type="match status" value="1"/>
</dbReference>
<dbReference type="PANTHER" id="PTHR34481">
    <property type="entry name" value="TRYPSIN/FACTOR XIIA INHIBITOR-RELATED"/>
    <property type="match status" value="1"/>
</dbReference>
<dbReference type="Pfam" id="PF00234">
    <property type="entry name" value="Tryp_alpha_amyl"/>
    <property type="match status" value="1"/>
</dbReference>
<dbReference type="PRINTS" id="PR00808">
    <property type="entry name" value="AMLASEINHBTR"/>
</dbReference>
<dbReference type="SMART" id="SM00499">
    <property type="entry name" value="AAI"/>
    <property type="match status" value="1"/>
</dbReference>
<dbReference type="SUPFAM" id="SSF47699">
    <property type="entry name" value="Bifunctional inhibitor/lipid-transfer protein/seed storage 2S albumin"/>
    <property type="match status" value="1"/>
</dbReference>
<dbReference type="PROSITE" id="PS00426">
    <property type="entry name" value="CEREAL_TRYP_AMYL_INH"/>
    <property type="match status" value="1"/>
</dbReference>
<feature type="signal peptide" evidence="1">
    <location>
        <begin position="1"/>
        <end position="25"/>
    </location>
</feature>
<feature type="chain" id="PRO_0000014344" description="Alpha-amylase/trypsin inhibitor CM1">
    <location>
        <begin position="26"/>
        <end position="145"/>
    </location>
</feature>